<protein>
    <recommendedName>
        <fullName>Conjugal transfer protein TraG</fullName>
    </recommendedName>
</protein>
<proteinExistence type="inferred from homology"/>
<name>TRAG_AGRFC</name>
<dbReference type="EMBL" id="AF010180">
    <property type="protein sequence ID" value="AAC17204.1"/>
    <property type="molecule type" value="Genomic_DNA"/>
</dbReference>
<dbReference type="EMBL" id="AE007871">
    <property type="protein sequence ID" value="AAK91088.1"/>
    <property type="molecule type" value="Genomic_DNA"/>
</dbReference>
<dbReference type="PIR" id="AB3243">
    <property type="entry name" value="AB3243"/>
</dbReference>
<dbReference type="PIR" id="T03416">
    <property type="entry name" value="T03416"/>
</dbReference>
<dbReference type="RefSeq" id="NP_396647.1">
    <property type="nucleotide sequence ID" value="NC_003065.3"/>
</dbReference>
<dbReference type="RefSeq" id="WP_010974894.1">
    <property type="nucleotide sequence ID" value="NC_003065.3"/>
</dbReference>
<dbReference type="SMR" id="Q44346"/>
<dbReference type="EnsemblBacteria" id="AAK91088">
    <property type="protein sequence ID" value="AAK91088"/>
    <property type="gene ID" value="Atu6124"/>
</dbReference>
<dbReference type="GeneID" id="1137447"/>
<dbReference type="KEGG" id="atu:Atu6124"/>
<dbReference type="PATRIC" id="fig|176299.10.peg.5331"/>
<dbReference type="HOGENOM" id="CLU_028732_0_0_5"/>
<dbReference type="OrthoDB" id="9759295at2"/>
<dbReference type="PhylomeDB" id="Q44346"/>
<dbReference type="BioCyc" id="AGRO:ATU6124-MONOMER"/>
<dbReference type="Proteomes" id="UP000000813">
    <property type="component" value="Plasmid Ti"/>
</dbReference>
<dbReference type="GO" id="GO:0005886">
    <property type="term" value="C:plasma membrane"/>
    <property type="evidence" value="ECO:0007669"/>
    <property type="project" value="UniProtKB-SubCell"/>
</dbReference>
<dbReference type="CDD" id="cd01127">
    <property type="entry name" value="TrwB_TraG_TraD_VirD4"/>
    <property type="match status" value="1"/>
</dbReference>
<dbReference type="Gene3D" id="3.40.50.300">
    <property type="entry name" value="P-loop containing nucleotide triphosphate hydrolases"/>
    <property type="match status" value="1"/>
</dbReference>
<dbReference type="InterPro" id="IPR027417">
    <property type="entry name" value="P-loop_NTPase"/>
</dbReference>
<dbReference type="InterPro" id="IPR051539">
    <property type="entry name" value="T4SS-coupling_protein"/>
</dbReference>
<dbReference type="InterPro" id="IPR014135">
    <property type="entry name" value="Ti-typ_conjug_TS_TraG-like"/>
</dbReference>
<dbReference type="InterPro" id="IPR003688">
    <property type="entry name" value="TraG/VirD4"/>
</dbReference>
<dbReference type="NCBIfam" id="NF010394">
    <property type="entry name" value="PRK13822.1"/>
    <property type="match status" value="1"/>
</dbReference>
<dbReference type="NCBIfam" id="TIGR02767">
    <property type="entry name" value="TraG-Ti"/>
    <property type="match status" value="1"/>
</dbReference>
<dbReference type="PANTHER" id="PTHR37937">
    <property type="entry name" value="CONJUGATIVE TRANSFER: DNA TRANSPORT"/>
    <property type="match status" value="1"/>
</dbReference>
<dbReference type="PANTHER" id="PTHR37937:SF1">
    <property type="entry name" value="CONJUGATIVE TRANSFER: DNA TRANSPORT"/>
    <property type="match status" value="1"/>
</dbReference>
<dbReference type="Pfam" id="PF02534">
    <property type="entry name" value="T4SS-DNA_transf"/>
    <property type="match status" value="1"/>
</dbReference>
<dbReference type="SUPFAM" id="SSF52540">
    <property type="entry name" value="P-loop containing nucleoside triphosphate hydrolases"/>
    <property type="match status" value="1"/>
</dbReference>
<sequence length="658" mass="71106">MTMNRLLLLILPAIIMLAAMFATSGMEQRLAAFGTSPQAKLMLGRAGLALPYIAAVAIGIIGLFAANGSANIKAAGLSVLAGSGVVITIATLREVIRLNSIASSVPAEQSVLAYADPVTMIGASIAFISGMFALRVAIKGNAAFATTAPKRIGGKRAVHGEADWMKIQEAAKLFPERGGIIIGERYRVDRDSVAAMPFRADDRQSWGAGGKSPLLCFDGSFGSSHGIVFAGSGGFKTTSVTIPTALKWGGGLVVLDPSSEVAPMVCEHRRQAGRKVIVLDPTAGGVGFNALDWIGRHGNTKEEDIVAVATWIMTDNPRTASARDDFFRASAMQLLTALIADVCLSGHTETEDQTLRRVRANLSEPEPKLRARLTKIYEGSESDFVKENVSVFVNMTPETFSGVYANAVKETHWLSYPNYAGLVSGDSFSTDDLADGGTDIFIALDLKVLEAHPGLARVVIGSLLNAIYNRNGNVKGRTLFLLDEVARLGYLRILETARDAGRKYGIMLTMIFQSLGQMREAYGGRDATSKWFESASWISFAAINDPDTADYISKRCGDTTVEVDQTNRSTGMKGSSRSRSKQLSRRPLILPHEVLHMRSDEQIVFTSGNPPLRCGRAIWFRRDDMKACVGENRFHRTGTGTDTHTEHAPPWQKEGTRP</sequence>
<evidence type="ECO:0000255" key="1"/>
<evidence type="ECO:0000256" key="2">
    <source>
        <dbReference type="SAM" id="MobiDB-lite"/>
    </source>
</evidence>
<evidence type="ECO:0000305" key="3"/>
<gene>
    <name type="primary">traG</name>
    <name type="ordered locus">Atu6124</name>
    <name type="ORF">AGR_pTi_bx12</name>
</gene>
<organism>
    <name type="scientific">Agrobacterium fabrum (strain C58 / ATCC 33970)</name>
    <name type="common">Agrobacterium tumefaciens (strain C58)</name>
    <dbReference type="NCBI Taxonomy" id="176299"/>
    <lineage>
        <taxon>Bacteria</taxon>
        <taxon>Pseudomonadati</taxon>
        <taxon>Pseudomonadota</taxon>
        <taxon>Alphaproteobacteria</taxon>
        <taxon>Hyphomicrobiales</taxon>
        <taxon>Rhizobiaceae</taxon>
        <taxon>Rhizobium/Agrobacterium group</taxon>
        <taxon>Agrobacterium</taxon>
        <taxon>Agrobacterium tumefaciens complex</taxon>
    </lineage>
</organism>
<keyword id="KW-1003">Cell membrane</keyword>
<keyword id="KW-0184">Conjugation</keyword>
<keyword id="KW-0472">Membrane</keyword>
<keyword id="KW-0614">Plasmid</keyword>
<keyword id="KW-1185">Reference proteome</keyword>
<keyword id="KW-0812">Transmembrane</keyword>
<keyword id="KW-1133">Transmembrane helix</keyword>
<accession>Q44346</accession>
<geneLocation type="plasmid">
    <name>pTiC58</name>
</geneLocation>
<feature type="chain" id="PRO_0000221654" description="Conjugal transfer protein TraG">
    <location>
        <begin position="1"/>
        <end position="658"/>
    </location>
</feature>
<feature type="transmembrane region" description="Helical" evidence="1">
    <location>
        <begin position="6"/>
        <end position="26"/>
    </location>
</feature>
<feature type="transmembrane region" description="Helical" evidence="1">
    <location>
        <begin position="46"/>
        <end position="66"/>
    </location>
</feature>
<feature type="transmembrane region" description="Helical" evidence="1">
    <location>
        <begin position="72"/>
        <end position="92"/>
    </location>
</feature>
<feature type="transmembrane region" description="Helical" evidence="1">
    <location>
        <begin position="118"/>
        <end position="138"/>
    </location>
</feature>
<feature type="transmembrane region" description="Helical" evidence="1">
    <location>
        <begin position="215"/>
        <end position="235"/>
    </location>
</feature>
<feature type="transmembrane region" description="Helical" evidence="1">
    <location>
        <begin position="275"/>
        <end position="295"/>
    </location>
</feature>
<feature type="region of interest" description="Disordered" evidence="2">
    <location>
        <begin position="562"/>
        <end position="585"/>
    </location>
</feature>
<feature type="region of interest" description="Disordered" evidence="2">
    <location>
        <begin position="637"/>
        <end position="658"/>
    </location>
</feature>
<feature type="compositionally biased region" description="Polar residues" evidence="2">
    <location>
        <begin position="562"/>
        <end position="573"/>
    </location>
</feature>
<reference key="1">
    <citation type="journal article" date="1996" name="J. Bacteriol.">
        <title>The tra region of the nopaline-type Ti plasmid is a chimera with elements related to the transfer systems of RSF1010, RP4, and F.</title>
        <authorList>
            <person name="Farrand S.K."/>
            <person name="Hwang I."/>
            <person name="Cook D.M."/>
        </authorList>
    </citation>
    <scope>NUCLEOTIDE SEQUENCE [GENOMIC DNA]</scope>
</reference>
<reference key="2">
    <citation type="journal article" date="2001" name="Science">
        <title>The genome of the natural genetic engineer Agrobacterium tumefaciens C58.</title>
        <authorList>
            <person name="Wood D.W."/>
            <person name="Setubal J.C."/>
            <person name="Kaul R."/>
            <person name="Monks D.E."/>
            <person name="Kitajima J.P."/>
            <person name="Okura V.K."/>
            <person name="Zhou Y."/>
            <person name="Chen L."/>
            <person name="Wood G.E."/>
            <person name="Almeida N.F. Jr."/>
            <person name="Woo L."/>
            <person name="Chen Y."/>
            <person name="Paulsen I.T."/>
            <person name="Eisen J.A."/>
            <person name="Karp P.D."/>
            <person name="Bovee D. Sr."/>
            <person name="Chapman P."/>
            <person name="Clendenning J."/>
            <person name="Deatherage G."/>
            <person name="Gillet W."/>
            <person name="Grant C."/>
            <person name="Kutyavin T."/>
            <person name="Levy R."/>
            <person name="Li M.-J."/>
            <person name="McClelland E."/>
            <person name="Palmieri A."/>
            <person name="Raymond C."/>
            <person name="Rouse G."/>
            <person name="Saenphimmachak C."/>
            <person name="Wu Z."/>
            <person name="Romero P."/>
            <person name="Gordon D."/>
            <person name="Zhang S."/>
            <person name="Yoo H."/>
            <person name="Tao Y."/>
            <person name="Biddle P."/>
            <person name="Jung M."/>
            <person name="Krespan W."/>
            <person name="Perry M."/>
            <person name="Gordon-Kamm B."/>
            <person name="Liao L."/>
            <person name="Kim S."/>
            <person name="Hendrick C."/>
            <person name="Zhao Z.-Y."/>
            <person name="Dolan M."/>
            <person name="Chumley F."/>
            <person name="Tingey S.V."/>
            <person name="Tomb J.-F."/>
            <person name="Gordon M.P."/>
            <person name="Olson M.V."/>
            <person name="Nester E.W."/>
        </authorList>
    </citation>
    <scope>NUCLEOTIDE SEQUENCE [LARGE SCALE GENOMIC DNA]</scope>
</reference>
<reference key="3">
    <citation type="journal article" date="2001" name="Science">
        <title>Genome sequence of the plant pathogen and biotechnology agent Agrobacterium tumefaciens C58.</title>
        <authorList>
            <person name="Goodner B."/>
            <person name="Hinkle G."/>
            <person name="Gattung S."/>
            <person name="Miller N."/>
            <person name="Blanchard M."/>
            <person name="Qurollo B."/>
            <person name="Goldman B.S."/>
            <person name="Cao Y."/>
            <person name="Askenazi M."/>
            <person name="Halling C."/>
            <person name="Mullin L."/>
            <person name="Houmiel K."/>
            <person name="Gordon J."/>
            <person name="Vaudin M."/>
            <person name="Iartchouk O."/>
            <person name="Epp A."/>
            <person name="Liu F."/>
            <person name="Wollam C."/>
            <person name="Allinger M."/>
            <person name="Doughty D."/>
            <person name="Scott C."/>
            <person name="Lappas C."/>
            <person name="Markelz B."/>
            <person name="Flanagan C."/>
            <person name="Crowell C."/>
            <person name="Gurson J."/>
            <person name="Lomo C."/>
            <person name="Sear C."/>
            <person name="Strub G."/>
            <person name="Cielo C."/>
            <person name="Slater S."/>
        </authorList>
    </citation>
    <scope>NUCLEOTIDE SEQUENCE [LARGE SCALE GENOMIC DNA]</scope>
    <source>
        <strain>C58 / ATCC 33970</strain>
    </source>
</reference>
<comment type="subcellular location">
    <subcellularLocation>
        <location evidence="3">Cell membrane</location>
        <topology evidence="3">Multi-pass membrane protein</topology>
    </subcellularLocation>
</comment>
<comment type="similarity">
    <text evidence="3">Belongs to the VirD4/TraG family.</text>
</comment>